<sequence length="293" mass="31193">MAAITASMVAELRAKTDAPMMECKKALTEADGDMAKAEELLRVKLGNKASKAASRVTAEGVVASFVGANAGALVELNCETDFVAKNDDFNAFAKTVAELVATQNPADVAALSALPLDGKTVDEVRLALVGKIGENISIRRFVRFETSNKLATYLHGSRIGVIVEYTGAQEQVGKDVAMHVAAMKPVSLSADEVPADLIEKERRVAEQKAAESGKPAEIVAKMVDGSVQKFLKEVSLLNQPFVKNDKQTIEQMLKAADAAVQKFALFVVGEGIEKRQDDFAAEVAAQVAAAKQQ</sequence>
<dbReference type="EMBL" id="CP000010">
    <property type="protein sequence ID" value="AAU47754.1"/>
    <property type="molecule type" value="Genomic_DNA"/>
</dbReference>
<dbReference type="RefSeq" id="WP_004197087.1">
    <property type="nucleotide sequence ID" value="NC_006348.1"/>
</dbReference>
<dbReference type="RefSeq" id="YP_103194.1">
    <property type="nucleotide sequence ID" value="NC_006348.1"/>
</dbReference>
<dbReference type="SMR" id="Q62JC5"/>
<dbReference type="GeneID" id="93060699"/>
<dbReference type="KEGG" id="bma:BMA1554"/>
<dbReference type="PATRIC" id="fig|243160.12.peg.1599"/>
<dbReference type="eggNOG" id="COG0264">
    <property type="taxonomic scope" value="Bacteria"/>
</dbReference>
<dbReference type="HOGENOM" id="CLU_047155_0_2_4"/>
<dbReference type="Proteomes" id="UP000006693">
    <property type="component" value="Chromosome 1"/>
</dbReference>
<dbReference type="GO" id="GO:0005737">
    <property type="term" value="C:cytoplasm"/>
    <property type="evidence" value="ECO:0007669"/>
    <property type="project" value="UniProtKB-SubCell"/>
</dbReference>
<dbReference type="GO" id="GO:0003746">
    <property type="term" value="F:translation elongation factor activity"/>
    <property type="evidence" value="ECO:0007669"/>
    <property type="project" value="UniProtKB-UniRule"/>
</dbReference>
<dbReference type="CDD" id="cd14275">
    <property type="entry name" value="UBA_EF-Ts"/>
    <property type="match status" value="1"/>
</dbReference>
<dbReference type="FunFam" id="1.10.286.20:FF:000001">
    <property type="entry name" value="Elongation factor Ts"/>
    <property type="match status" value="1"/>
</dbReference>
<dbReference type="FunFam" id="1.10.8.10:FF:000001">
    <property type="entry name" value="Elongation factor Ts"/>
    <property type="match status" value="1"/>
</dbReference>
<dbReference type="Gene3D" id="1.10.286.20">
    <property type="match status" value="1"/>
</dbReference>
<dbReference type="Gene3D" id="1.10.8.10">
    <property type="entry name" value="DNA helicase RuvA subunit, C-terminal domain"/>
    <property type="match status" value="1"/>
</dbReference>
<dbReference type="Gene3D" id="3.30.479.20">
    <property type="entry name" value="Elongation factor Ts, dimerisation domain"/>
    <property type="match status" value="2"/>
</dbReference>
<dbReference type="HAMAP" id="MF_00050">
    <property type="entry name" value="EF_Ts"/>
    <property type="match status" value="1"/>
</dbReference>
<dbReference type="InterPro" id="IPR036402">
    <property type="entry name" value="EF-Ts_dimer_sf"/>
</dbReference>
<dbReference type="InterPro" id="IPR001816">
    <property type="entry name" value="Transl_elong_EFTs/EF1B"/>
</dbReference>
<dbReference type="InterPro" id="IPR014039">
    <property type="entry name" value="Transl_elong_EFTs/EF1B_dimer"/>
</dbReference>
<dbReference type="InterPro" id="IPR018101">
    <property type="entry name" value="Transl_elong_Ts_CS"/>
</dbReference>
<dbReference type="InterPro" id="IPR009060">
    <property type="entry name" value="UBA-like_sf"/>
</dbReference>
<dbReference type="NCBIfam" id="TIGR00116">
    <property type="entry name" value="tsf"/>
    <property type="match status" value="1"/>
</dbReference>
<dbReference type="PANTHER" id="PTHR11741">
    <property type="entry name" value="ELONGATION FACTOR TS"/>
    <property type="match status" value="1"/>
</dbReference>
<dbReference type="PANTHER" id="PTHR11741:SF0">
    <property type="entry name" value="ELONGATION FACTOR TS, MITOCHONDRIAL"/>
    <property type="match status" value="1"/>
</dbReference>
<dbReference type="Pfam" id="PF00889">
    <property type="entry name" value="EF_TS"/>
    <property type="match status" value="1"/>
</dbReference>
<dbReference type="SUPFAM" id="SSF54713">
    <property type="entry name" value="Elongation factor Ts (EF-Ts), dimerisation domain"/>
    <property type="match status" value="2"/>
</dbReference>
<dbReference type="SUPFAM" id="SSF46934">
    <property type="entry name" value="UBA-like"/>
    <property type="match status" value="1"/>
</dbReference>
<dbReference type="PROSITE" id="PS01127">
    <property type="entry name" value="EF_TS_2"/>
    <property type="match status" value="1"/>
</dbReference>
<name>EFTS_BURMA</name>
<accession>Q62JC5</accession>
<gene>
    <name evidence="1" type="primary">tsf</name>
    <name type="ordered locus">BMA1554</name>
</gene>
<evidence type="ECO:0000255" key="1">
    <source>
        <dbReference type="HAMAP-Rule" id="MF_00050"/>
    </source>
</evidence>
<organism>
    <name type="scientific">Burkholderia mallei (strain ATCC 23344)</name>
    <dbReference type="NCBI Taxonomy" id="243160"/>
    <lineage>
        <taxon>Bacteria</taxon>
        <taxon>Pseudomonadati</taxon>
        <taxon>Pseudomonadota</taxon>
        <taxon>Betaproteobacteria</taxon>
        <taxon>Burkholderiales</taxon>
        <taxon>Burkholderiaceae</taxon>
        <taxon>Burkholderia</taxon>
        <taxon>pseudomallei group</taxon>
    </lineage>
</organism>
<comment type="function">
    <text evidence="1">Associates with the EF-Tu.GDP complex and induces the exchange of GDP to GTP. It remains bound to the aminoacyl-tRNA.EF-Tu.GTP complex up to the GTP hydrolysis stage on the ribosome.</text>
</comment>
<comment type="subcellular location">
    <subcellularLocation>
        <location evidence="1">Cytoplasm</location>
    </subcellularLocation>
</comment>
<comment type="similarity">
    <text evidence="1">Belongs to the EF-Ts family.</text>
</comment>
<reference key="1">
    <citation type="journal article" date="2004" name="Proc. Natl. Acad. Sci. U.S.A.">
        <title>Structural flexibility in the Burkholderia mallei genome.</title>
        <authorList>
            <person name="Nierman W.C."/>
            <person name="DeShazer D."/>
            <person name="Kim H.S."/>
            <person name="Tettelin H."/>
            <person name="Nelson K.E."/>
            <person name="Feldblyum T.V."/>
            <person name="Ulrich R.L."/>
            <person name="Ronning C.M."/>
            <person name="Brinkac L.M."/>
            <person name="Daugherty S.C."/>
            <person name="Davidsen T.D."/>
            <person name="DeBoy R.T."/>
            <person name="Dimitrov G."/>
            <person name="Dodson R.J."/>
            <person name="Durkin A.S."/>
            <person name="Gwinn M.L."/>
            <person name="Haft D.H."/>
            <person name="Khouri H.M."/>
            <person name="Kolonay J.F."/>
            <person name="Madupu R."/>
            <person name="Mohammoud Y."/>
            <person name="Nelson W.C."/>
            <person name="Radune D."/>
            <person name="Romero C.M."/>
            <person name="Sarria S."/>
            <person name="Selengut J."/>
            <person name="Shamblin C."/>
            <person name="Sullivan S.A."/>
            <person name="White O."/>
            <person name="Yu Y."/>
            <person name="Zafar N."/>
            <person name="Zhou L."/>
            <person name="Fraser C.M."/>
        </authorList>
    </citation>
    <scope>NUCLEOTIDE SEQUENCE [LARGE SCALE GENOMIC DNA]</scope>
    <source>
        <strain>ATCC 23344</strain>
    </source>
</reference>
<feature type="chain" id="PRO_0000161095" description="Elongation factor Ts">
    <location>
        <begin position="1"/>
        <end position="293"/>
    </location>
</feature>
<feature type="region of interest" description="Involved in Mg(2+) ion dislocation from EF-Tu" evidence="1">
    <location>
        <begin position="80"/>
        <end position="83"/>
    </location>
</feature>
<keyword id="KW-0963">Cytoplasm</keyword>
<keyword id="KW-0251">Elongation factor</keyword>
<keyword id="KW-0648">Protein biosynthesis</keyword>
<keyword id="KW-1185">Reference proteome</keyword>
<proteinExistence type="inferred from homology"/>
<protein>
    <recommendedName>
        <fullName evidence="1">Elongation factor Ts</fullName>
        <shortName evidence="1">EF-Ts</shortName>
    </recommendedName>
</protein>